<accession>Q9A7R9</accession>
<reference key="1">
    <citation type="journal article" date="2001" name="Proc. Natl. Acad. Sci. U.S.A.">
        <title>Complete genome sequence of Caulobacter crescentus.</title>
        <authorList>
            <person name="Nierman W.C."/>
            <person name="Feldblyum T.V."/>
            <person name="Laub M.T."/>
            <person name="Paulsen I.T."/>
            <person name="Nelson K.E."/>
            <person name="Eisen J.A."/>
            <person name="Heidelberg J.F."/>
            <person name="Alley M.R.K."/>
            <person name="Ohta N."/>
            <person name="Maddock J.R."/>
            <person name="Potocka I."/>
            <person name="Nelson W.C."/>
            <person name="Newton A."/>
            <person name="Stephens C."/>
            <person name="Phadke N.D."/>
            <person name="Ely B."/>
            <person name="DeBoy R.T."/>
            <person name="Dodson R.J."/>
            <person name="Durkin A.S."/>
            <person name="Gwinn M.L."/>
            <person name="Haft D.H."/>
            <person name="Kolonay J.F."/>
            <person name="Smit J."/>
            <person name="Craven M.B."/>
            <person name="Khouri H.M."/>
            <person name="Shetty J."/>
            <person name="Berry K.J."/>
            <person name="Utterback T.R."/>
            <person name="Tran K."/>
            <person name="Wolf A.M."/>
            <person name="Vamathevan J.J."/>
            <person name="Ermolaeva M.D."/>
            <person name="White O."/>
            <person name="Salzberg S.L."/>
            <person name="Venter J.C."/>
            <person name="Shapiro L."/>
            <person name="Fraser C.M."/>
        </authorList>
    </citation>
    <scope>NUCLEOTIDE SEQUENCE [LARGE SCALE GENOMIC DNA]</scope>
    <source>
        <strain>ATCC 19089 / CIP 103742 / CB 15</strain>
    </source>
</reference>
<sequence>MSAHREETVRRLAAPDIAARKGGVPIVCLTAYTAPVAAALDDACDVLLVGDSVGMVVHGLPNTVGVTMEMMILHGQAVMRGSKKAMVVVDMPFGSYEASHEEAYANAVRIMKETGAQAVKVESGPTVPETIAYLTRRGVPVMGHVGLRPQAVLLEGGFKAKGKDDAGRAKVLEEARLTAEAGAFAIVVEGVAESLAREVTESVSVPTIGIGASAGCDGQVLVVDDMLGLFDWTPKFVRRYADLKGEIERAAAQYASDVRDRSFPGPAETYYAKKP</sequence>
<comment type="function">
    <text evidence="1">Catalyzes the reversible reaction in which hydroxymethyl group from 5,10-methylenetetrahydrofolate is transferred onto alpha-ketoisovalerate to form ketopantoate.</text>
</comment>
<comment type="catalytic activity">
    <reaction evidence="1">
        <text>3-methyl-2-oxobutanoate + (6R)-5,10-methylene-5,6,7,8-tetrahydrofolate + H2O = 2-dehydropantoate + (6S)-5,6,7,8-tetrahydrofolate</text>
        <dbReference type="Rhea" id="RHEA:11824"/>
        <dbReference type="ChEBI" id="CHEBI:11561"/>
        <dbReference type="ChEBI" id="CHEBI:11851"/>
        <dbReference type="ChEBI" id="CHEBI:15377"/>
        <dbReference type="ChEBI" id="CHEBI:15636"/>
        <dbReference type="ChEBI" id="CHEBI:57453"/>
        <dbReference type="EC" id="2.1.2.11"/>
    </reaction>
</comment>
<comment type="cofactor">
    <cofactor evidence="1">
        <name>Mg(2+)</name>
        <dbReference type="ChEBI" id="CHEBI:18420"/>
    </cofactor>
    <text evidence="1">Binds 1 Mg(2+) ion per subunit.</text>
</comment>
<comment type="pathway">
    <text evidence="1">Cofactor biosynthesis; (R)-pantothenate biosynthesis; (R)-pantoate from 3-methyl-2-oxobutanoate: step 1/2.</text>
</comment>
<comment type="subunit">
    <text evidence="1">Homodecamer; pentamer of dimers.</text>
</comment>
<comment type="subcellular location">
    <subcellularLocation>
        <location evidence="1">Cytoplasm</location>
    </subcellularLocation>
</comment>
<comment type="similarity">
    <text evidence="1">Belongs to the PanB family.</text>
</comment>
<comment type="sequence caution" evidence="2">
    <conflict type="erroneous initiation">
        <sequence resource="EMBL-CDS" id="AAK23629"/>
    </conflict>
</comment>
<evidence type="ECO:0000255" key="1">
    <source>
        <dbReference type="HAMAP-Rule" id="MF_00156"/>
    </source>
</evidence>
<evidence type="ECO:0000305" key="2"/>
<protein>
    <recommendedName>
        <fullName evidence="1">3-methyl-2-oxobutanoate hydroxymethyltransferase</fullName>
        <ecNumber evidence="1">2.1.2.11</ecNumber>
    </recommendedName>
    <alternativeName>
        <fullName evidence="1">Ketopantoate hydroxymethyltransferase</fullName>
        <shortName evidence="1">KPHMT</shortName>
    </alternativeName>
</protein>
<feature type="chain" id="PRO_0000297242" description="3-methyl-2-oxobutanoate hydroxymethyltransferase">
    <location>
        <begin position="1"/>
        <end position="275"/>
    </location>
</feature>
<feature type="active site" description="Proton acceptor" evidence="1">
    <location>
        <position position="189"/>
    </location>
</feature>
<feature type="binding site" evidence="1">
    <location>
        <begin position="51"/>
        <end position="52"/>
    </location>
    <ligand>
        <name>3-methyl-2-oxobutanoate</name>
        <dbReference type="ChEBI" id="CHEBI:11851"/>
    </ligand>
</feature>
<feature type="binding site" evidence="1">
    <location>
        <position position="51"/>
    </location>
    <ligand>
        <name>Mg(2+)</name>
        <dbReference type="ChEBI" id="CHEBI:18420"/>
    </ligand>
</feature>
<feature type="binding site" evidence="1">
    <location>
        <position position="90"/>
    </location>
    <ligand>
        <name>3-methyl-2-oxobutanoate</name>
        <dbReference type="ChEBI" id="CHEBI:11851"/>
    </ligand>
</feature>
<feature type="binding site" evidence="1">
    <location>
        <position position="90"/>
    </location>
    <ligand>
        <name>Mg(2+)</name>
        <dbReference type="ChEBI" id="CHEBI:18420"/>
    </ligand>
</feature>
<feature type="binding site" evidence="1">
    <location>
        <position position="120"/>
    </location>
    <ligand>
        <name>3-methyl-2-oxobutanoate</name>
        <dbReference type="ChEBI" id="CHEBI:11851"/>
    </ligand>
</feature>
<feature type="binding site" evidence="1">
    <location>
        <position position="122"/>
    </location>
    <ligand>
        <name>Mg(2+)</name>
        <dbReference type="ChEBI" id="CHEBI:18420"/>
    </ligand>
</feature>
<proteinExistence type="inferred from homology"/>
<keyword id="KW-0963">Cytoplasm</keyword>
<keyword id="KW-0460">Magnesium</keyword>
<keyword id="KW-0479">Metal-binding</keyword>
<keyword id="KW-0566">Pantothenate biosynthesis</keyword>
<keyword id="KW-1185">Reference proteome</keyword>
<keyword id="KW-0808">Transferase</keyword>
<organism>
    <name type="scientific">Caulobacter vibrioides (strain ATCC 19089 / CIP 103742 / CB 15)</name>
    <name type="common">Caulobacter crescentus</name>
    <dbReference type="NCBI Taxonomy" id="190650"/>
    <lineage>
        <taxon>Bacteria</taxon>
        <taxon>Pseudomonadati</taxon>
        <taxon>Pseudomonadota</taxon>
        <taxon>Alphaproteobacteria</taxon>
        <taxon>Caulobacterales</taxon>
        <taxon>Caulobacteraceae</taxon>
        <taxon>Caulobacter</taxon>
    </lineage>
</organism>
<gene>
    <name evidence="1" type="primary">panB</name>
    <name type="ordered locus">CC_1651</name>
</gene>
<name>PANB_CAUVC</name>
<dbReference type="EC" id="2.1.2.11" evidence="1"/>
<dbReference type="EMBL" id="AE005673">
    <property type="protein sequence ID" value="AAK23629.1"/>
    <property type="status" value="ALT_INIT"/>
    <property type="molecule type" value="Genomic_DNA"/>
</dbReference>
<dbReference type="PIR" id="A87454">
    <property type="entry name" value="A87454"/>
</dbReference>
<dbReference type="RefSeq" id="NP_420461.1">
    <property type="nucleotide sequence ID" value="NC_002696.2"/>
</dbReference>
<dbReference type="RefSeq" id="WP_012640297.1">
    <property type="nucleotide sequence ID" value="NC_002696.2"/>
</dbReference>
<dbReference type="SMR" id="Q9A7R9"/>
<dbReference type="STRING" id="190650.CC_1651"/>
<dbReference type="EnsemblBacteria" id="AAK23629">
    <property type="protein sequence ID" value="AAK23629"/>
    <property type="gene ID" value="CC_1651"/>
</dbReference>
<dbReference type="KEGG" id="ccr:CC_1651"/>
<dbReference type="PATRIC" id="fig|190650.5.peg.1680"/>
<dbReference type="eggNOG" id="COG0413">
    <property type="taxonomic scope" value="Bacteria"/>
</dbReference>
<dbReference type="HOGENOM" id="CLU_036645_1_0_5"/>
<dbReference type="UniPathway" id="UPA00028">
    <property type="reaction ID" value="UER00003"/>
</dbReference>
<dbReference type="Proteomes" id="UP000001816">
    <property type="component" value="Chromosome"/>
</dbReference>
<dbReference type="GO" id="GO:0005737">
    <property type="term" value="C:cytoplasm"/>
    <property type="evidence" value="ECO:0007669"/>
    <property type="project" value="UniProtKB-SubCell"/>
</dbReference>
<dbReference type="GO" id="GO:0003864">
    <property type="term" value="F:3-methyl-2-oxobutanoate hydroxymethyltransferase activity"/>
    <property type="evidence" value="ECO:0007669"/>
    <property type="project" value="UniProtKB-UniRule"/>
</dbReference>
<dbReference type="GO" id="GO:0000287">
    <property type="term" value="F:magnesium ion binding"/>
    <property type="evidence" value="ECO:0007669"/>
    <property type="project" value="TreeGrafter"/>
</dbReference>
<dbReference type="GO" id="GO:0015940">
    <property type="term" value="P:pantothenate biosynthetic process"/>
    <property type="evidence" value="ECO:0007669"/>
    <property type="project" value="UniProtKB-UniRule"/>
</dbReference>
<dbReference type="CDD" id="cd06557">
    <property type="entry name" value="KPHMT-like"/>
    <property type="match status" value="1"/>
</dbReference>
<dbReference type="FunFam" id="3.20.20.60:FF:000003">
    <property type="entry name" value="3-methyl-2-oxobutanoate hydroxymethyltransferase"/>
    <property type="match status" value="1"/>
</dbReference>
<dbReference type="Gene3D" id="3.20.20.60">
    <property type="entry name" value="Phosphoenolpyruvate-binding domains"/>
    <property type="match status" value="1"/>
</dbReference>
<dbReference type="HAMAP" id="MF_00156">
    <property type="entry name" value="PanB"/>
    <property type="match status" value="1"/>
</dbReference>
<dbReference type="InterPro" id="IPR003700">
    <property type="entry name" value="Pantoate_hydroxy_MeTrfase"/>
</dbReference>
<dbReference type="InterPro" id="IPR015813">
    <property type="entry name" value="Pyrv/PenolPyrv_kinase-like_dom"/>
</dbReference>
<dbReference type="InterPro" id="IPR040442">
    <property type="entry name" value="Pyrv_kinase-like_dom_sf"/>
</dbReference>
<dbReference type="NCBIfam" id="TIGR00222">
    <property type="entry name" value="panB"/>
    <property type="match status" value="1"/>
</dbReference>
<dbReference type="NCBIfam" id="NF001452">
    <property type="entry name" value="PRK00311.1"/>
    <property type="match status" value="1"/>
</dbReference>
<dbReference type="PANTHER" id="PTHR20881">
    <property type="entry name" value="3-METHYL-2-OXOBUTANOATE HYDROXYMETHYLTRANSFERASE"/>
    <property type="match status" value="1"/>
</dbReference>
<dbReference type="PANTHER" id="PTHR20881:SF0">
    <property type="entry name" value="3-METHYL-2-OXOBUTANOATE HYDROXYMETHYLTRANSFERASE"/>
    <property type="match status" value="1"/>
</dbReference>
<dbReference type="Pfam" id="PF02548">
    <property type="entry name" value="Pantoate_transf"/>
    <property type="match status" value="1"/>
</dbReference>
<dbReference type="PIRSF" id="PIRSF000388">
    <property type="entry name" value="Pantoate_hydroxy_MeTrfase"/>
    <property type="match status" value="1"/>
</dbReference>
<dbReference type="SUPFAM" id="SSF51621">
    <property type="entry name" value="Phosphoenolpyruvate/pyruvate domain"/>
    <property type="match status" value="1"/>
</dbReference>